<proteinExistence type="evidence at protein level"/>
<sequence>MPLPPDITFDSLALIKMHSQSMKKILEITLAKFTVNLSIVTVYRYLTVRAYLKKNIELELDVLKDIYNIVPLNEEIAIKAAQIEADLMRKGMMPDIEDVLTAATAIYTKSLLITDDSKRYEPMRRFGLDTMPLDKFVKEVELMVEKELI</sequence>
<protein>
    <recommendedName>
        <fullName>VapC ribonuclease PF0355</fullName>
        <shortName>RNase PF0355</shortName>
        <ecNumber evidence="1">3.1.-.-</ecNumber>
    </recommendedName>
    <alternativeName>
        <fullName>Putative toxin PF0355</fullName>
    </alternativeName>
</protein>
<name>Y355_PYRFU</name>
<feature type="chain" id="PRO_0000407905" description="VapC ribonuclease PF0355">
    <location>
        <begin position="1"/>
        <end position="149"/>
    </location>
</feature>
<feature type="domain" description="PINc" evidence="1">
    <location>
        <begin position="8"/>
        <end position="122"/>
    </location>
</feature>
<feature type="binding site" evidence="1">
    <location>
        <position position="10"/>
    </location>
    <ligand>
        <name>Mg(2+)</name>
        <dbReference type="ChEBI" id="CHEBI:18420"/>
    </ligand>
</feature>
<feature type="binding site" evidence="1">
    <location>
        <position position="98"/>
    </location>
    <ligand>
        <name>Mg(2+)</name>
        <dbReference type="ChEBI" id="CHEBI:18420"/>
    </ligand>
</feature>
<feature type="strand" evidence="2">
    <location>
        <begin position="6"/>
        <end position="9"/>
    </location>
</feature>
<feature type="helix" evidence="2">
    <location>
        <begin position="11"/>
        <end position="17"/>
    </location>
</feature>
<feature type="helix" evidence="2">
    <location>
        <begin position="20"/>
        <end position="22"/>
    </location>
</feature>
<feature type="helix" evidence="2">
    <location>
        <begin position="23"/>
        <end position="32"/>
    </location>
</feature>
<feature type="strand" evidence="2">
    <location>
        <begin position="33"/>
        <end position="38"/>
    </location>
</feature>
<feature type="helix" evidence="2">
    <location>
        <begin position="39"/>
        <end position="51"/>
    </location>
</feature>
<feature type="helix" evidence="2">
    <location>
        <begin position="56"/>
        <end position="66"/>
    </location>
</feature>
<feature type="strand" evidence="2">
    <location>
        <begin position="67"/>
        <end position="70"/>
    </location>
</feature>
<feature type="helix" evidence="2">
    <location>
        <begin position="74"/>
        <end position="88"/>
    </location>
</feature>
<feature type="turn" evidence="2">
    <location>
        <begin position="89"/>
        <end position="91"/>
    </location>
</feature>
<feature type="helix" evidence="2">
    <location>
        <begin position="96"/>
        <end position="108"/>
    </location>
</feature>
<feature type="strand" evidence="2">
    <location>
        <begin position="111"/>
        <end position="115"/>
    </location>
</feature>
<feature type="helix" evidence="2">
    <location>
        <begin position="117"/>
        <end position="126"/>
    </location>
</feature>
<feature type="strand" evidence="2">
    <location>
        <begin position="130"/>
        <end position="132"/>
    </location>
</feature>
<feature type="helix" evidence="2">
    <location>
        <begin position="133"/>
        <end position="147"/>
    </location>
</feature>
<gene>
    <name type="ordered locus">PF0355</name>
</gene>
<dbReference type="EC" id="3.1.-.-" evidence="1"/>
<dbReference type="EMBL" id="AE009950">
    <property type="protein sequence ID" value="AAL80479.1"/>
    <property type="molecule type" value="Genomic_DNA"/>
</dbReference>
<dbReference type="RefSeq" id="WP_014835128.1">
    <property type="nucleotide sequence ID" value="NZ_CP023154.1"/>
</dbReference>
<dbReference type="PDB" id="1Y82">
    <property type="method" value="X-ray"/>
    <property type="resolution" value="2.30 A"/>
    <property type="chains" value="A/B/C/D=2-149"/>
</dbReference>
<dbReference type="PDBsum" id="1Y82"/>
<dbReference type="SMR" id="Q8U3V0"/>
<dbReference type="STRING" id="186497.PF0355"/>
<dbReference type="PaxDb" id="186497-PF0355"/>
<dbReference type="KEGG" id="pfu:PF0355"/>
<dbReference type="PATRIC" id="fig|186497.12.peg.368"/>
<dbReference type="eggNOG" id="arCOG02224">
    <property type="taxonomic scope" value="Archaea"/>
</dbReference>
<dbReference type="HOGENOM" id="CLU_142042_0_0_2"/>
<dbReference type="OrthoDB" id="85585at2157"/>
<dbReference type="PhylomeDB" id="Q8U3V0"/>
<dbReference type="EvolutionaryTrace" id="Q8U3V0"/>
<dbReference type="Proteomes" id="UP000001013">
    <property type="component" value="Chromosome"/>
</dbReference>
<dbReference type="GO" id="GO:0000287">
    <property type="term" value="F:magnesium ion binding"/>
    <property type="evidence" value="ECO:0007669"/>
    <property type="project" value="UniProtKB-UniRule"/>
</dbReference>
<dbReference type="GO" id="GO:0004540">
    <property type="term" value="F:RNA nuclease activity"/>
    <property type="evidence" value="ECO:0007669"/>
    <property type="project" value="InterPro"/>
</dbReference>
<dbReference type="CDD" id="cd18730">
    <property type="entry name" value="PIN_PH0500-like"/>
    <property type="match status" value="1"/>
</dbReference>
<dbReference type="Gene3D" id="3.40.50.1010">
    <property type="entry name" value="5'-nuclease"/>
    <property type="match status" value="1"/>
</dbReference>
<dbReference type="HAMAP" id="MF_00265">
    <property type="entry name" value="VapC_Nob1"/>
    <property type="match status" value="1"/>
</dbReference>
<dbReference type="InterPro" id="IPR029060">
    <property type="entry name" value="PIN-like_dom_sf"/>
</dbReference>
<dbReference type="InterPro" id="IPR002716">
    <property type="entry name" value="PIN_dom"/>
</dbReference>
<dbReference type="InterPro" id="IPR051749">
    <property type="entry name" value="PINc/VapC_TA_RNase"/>
</dbReference>
<dbReference type="InterPro" id="IPR022907">
    <property type="entry name" value="VapC_family"/>
</dbReference>
<dbReference type="InterPro" id="IPR016647">
    <property type="entry name" value="VapV_Thermo"/>
</dbReference>
<dbReference type="PANTHER" id="PTHR42740:SF2">
    <property type="entry name" value="RIBONUCLEASE VAPC1"/>
    <property type="match status" value="1"/>
</dbReference>
<dbReference type="PANTHER" id="PTHR42740">
    <property type="entry name" value="RIBONUCLEASE VAPC3"/>
    <property type="match status" value="1"/>
</dbReference>
<dbReference type="Pfam" id="PF01850">
    <property type="entry name" value="PIN"/>
    <property type="match status" value="1"/>
</dbReference>
<dbReference type="PIRSF" id="PIRSF016154">
    <property type="entry name" value="NA-bd_PIN_PH0500"/>
    <property type="match status" value="1"/>
</dbReference>
<dbReference type="SUPFAM" id="SSF88723">
    <property type="entry name" value="PIN domain-like"/>
    <property type="match status" value="1"/>
</dbReference>
<accession>Q8U3V0</accession>
<organism>
    <name type="scientific">Pyrococcus furiosus (strain ATCC 43587 / DSM 3638 / JCM 8422 / Vc1)</name>
    <dbReference type="NCBI Taxonomy" id="186497"/>
    <lineage>
        <taxon>Archaea</taxon>
        <taxon>Methanobacteriati</taxon>
        <taxon>Methanobacteriota</taxon>
        <taxon>Thermococci</taxon>
        <taxon>Thermococcales</taxon>
        <taxon>Thermococcaceae</taxon>
        <taxon>Pyrococcus</taxon>
    </lineage>
</organism>
<evidence type="ECO:0000255" key="1">
    <source>
        <dbReference type="HAMAP-Rule" id="MF_00265"/>
    </source>
</evidence>
<evidence type="ECO:0007829" key="2">
    <source>
        <dbReference type="PDB" id="1Y82"/>
    </source>
</evidence>
<comment type="function">
    <text evidence="1">Toxic component of a type II toxin-antitoxin (TA) system. An RNase.</text>
</comment>
<comment type="cofactor">
    <cofactor evidence="1">
        <name>Mg(2+)</name>
        <dbReference type="ChEBI" id="CHEBI:18420"/>
    </cofactor>
</comment>
<comment type="similarity">
    <text evidence="1">Belongs to the PINc/VapC protein family.</text>
</comment>
<reference key="1">
    <citation type="journal article" date="1999" name="Genetics">
        <title>Divergence of the hyperthermophilic archaea Pyrococcus furiosus and P. horikoshii inferred from complete genomic sequences.</title>
        <authorList>
            <person name="Maeder D.L."/>
            <person name="Weiss R.B."/>
            <person name="Dunn D.M."/>
            <person name="Cherry J.L."/>
            <person name="Gonzalez J.M."/>
            <person name="DiRuggiero J."/>
            <person name="Robb F.T."/>
        </authorList>
    </citation>
    <scope>NUCLEOTIDE SEQUENCE [LARGE SCALE GENOMIC DNA]</scope>
    <source>
        <strain>ATCC 43587 / DSM 3638 / JCM 8422 / Vc1</strain>
    </source>
</reference>
<reference key="2">
    <citation type="submission" date="2004-12" db="PDB data bank">
        <title>Conserved hypothetical protein Pfu-367848-001 from Pyrococcus furiosus.</title>
        <authorList>
            <consortium name="Southeast collaboratory for structural genomics (SECSG)"/>
            <person name="Horanyi P."/>
            <person name="Tempel W."/>
            <person name="Habel J."/>
            <person name="Chen L."/>
            <person name="Lee D."/>
            <person name="Nguyen D."/>
            <person name="Chang S.-H."/>
            <person name="Florence Q."/>
            <person name="Zhou W."/>
            <person name="Lin D."/>
            <person name="Zhang H."/>
            <person name="Praissman J."/>
            <person name="Jenney F.E. Jr."/>
            <person name="Adams M.W.W."/>
            <person name="Liu Z.-J."/>
            <person name="Rose J.P."/>
            <person name="Wang B.C."/>
        </authorList>
    </citation>
    <scope>X-RAY CRYSTALLOGRAPHY (2.30 ANGSTROMS) OF 2-149</scope>
</reference>
<keyword id="KW-0002">3D-structure</keyword>
<keyword id="KW-0378">Hydrolase</keyword>
<keyword id="KW-0460">Magnesium</keyword>
<keyword id="KW-0479">Metal-binding</keyword>
<keyword id="KW-0540">Nuclease</keyword>
<keyword id="KW-1185">Reference proteome</keyword>
<keyword id="KW-1277">Toxin-antitoxin system</keyword>